<reference key="1">
    <citation type="submission" date="2005-04" db="EMBL/GenBank/DDBJ databases">
        <authorList>
            <person name="Bandeira S.C.B."/>
            <person name="Nobrega M.P."/>
        </authorList>
    </citation>
    <scope>NUCLEOTIDE SEQUENCE [MRNA]</scope>
</reference>
<organism>
    <name type="scientific">Paracoccidioides brasiliensis</name>
    <dbReference type="NCBI Taxonomy" id="121759"/>
    <lineage>
        <taxon>Eukaryota</taxon>
        <taxon>Fungi</taxon>
        <taxon>Dikarya</taxon>
        <taxon>Ascomycota</taxon>
        <taxon>Pezizomycotina</taxon>
        <taxon>Eurotiomycetes</taxon>
        <taxon>Eurotiomycetidae</taxon>
        <taxon>Onygenales</taxon>
        <taxon>Ajellomycetaceae</taxon>
        <taxon>Paracoccidioides</taxon>
    </lineage>
</organism>
<protein>
    <recommendedName>
        <fullName>Cytochrome c oxidase assembly protein COX19</fullName>
    </recommendedName>
</protein>
<proteinExistence type="inferred from homology"/>
<name>COX19_PARBR</name>
<evidence type="ECO:0000250" key="1"/>
<evidence type="ECO:0000255" key="2">
    <source>
        <dbReference type="PROSITE-ProRule" id="PRU01150"/>
    </source>
</evidence>
<evidence type="ECO:0000256" key="3">
    <source>
        <dbReference type="SAM" id="MobiDB-lite"/>
    </source>
</evidence>
<evidence type="ECO:0000305" key="4"/>
<sequence>MSFGSPGGRSVNIKPKPPERGSFPLDHDGECKFIISSYLQCLKKGGGVNDETCRKLAKSYLSCRMDHNLMAPECFENLGLVFDEDKKKREEASASTTAASESKKPST</sequence>
<accession>Q462Q7</accession>
<keyword id="KW-0963">Cytoplasm</keyword>
<keyword id="KW-1015">Disulfide bond</keyword>
<keyword id="KW-0496">Mitochondrion</keyword>
<dbReference type="EMBL" id="DQ003714">
    <property type="protein sequence ID" value="AAY64182.1"/>
    <property type="molecule type" value="mRNA"/>
</dbReference>
<dbReference type="SMR" id="Q462Q7"/>
<dbReference type="VEuPathDB" id="FungiDB:PABG_03278"/>
<dbReference type="VEuPathDB" id="FungiDB:PADG_01841"/>
<dbReference type="GO" id="GO:0005758">
    <property type="term" value="C:mitochondrial intermembrane space"/>
    <property type="evidence" value="ECO:0007669"/>
    <property type="project" value="UniProtKB-SubCell"/>
</dbReference>
<dbReference type="GO" id="GO:0033617">
    <property type="term" value="P:mitochondrial cytochrome c oxidase assembly"/>
    <property type="evidence" value="ECO:0007669"/>
    <property type="project" value="TreeGrafter"/>
</dbReference>
<dbReference type="InterPro" id="IPR051383">
    <property type="entry name" value="COX19"/>
</dbReference>
<dbReference type="PANTHER" id="PTHR21107">
    <property type="entry name" value="CYTOCHROME C OXIDASE ASSEMBLY PROTEIN COX19"/>
    <property type="match status" value="1"/>
</dbReference>
<dbReference type="PANTHER" id="PTHR21107:SF2">
    <property type="entry name" value="CYTOCHROME C OXIDASE ASSEMBLY PROTEIN COX19"/>
    <property type="match status" value="1"/>
</dbReference>
<dbReference type="PROSITE" id="PS51808">
    <property type="entry name" value="CHCH"/>
    <property type="match status" value="1"/>
</dbReference>
<feature type="chain" id="PRO_0000122289" description="Cytochrome c oxidase assembly protein COX19">
    <location>
        <begin position="1"/>
        <end position="107"/>
    </location>
</feature>
<feature type="domain" description="CHCH" evidence="2">
    <location>
        <begin position="28"/>
        <end position="71"/>
    </location>
</feature>
<feature type="region of interest" description="Disordered" evidence="3">
    <location>
        <begin position="1"/>
        <end position="22"/>
    </location>
</feature>
<feature type="region of interest" description="Disordered" evidence="3">
    <location>
        <begin position="87"/>
        <end position="107"/>
    </location>
</feature>
<feature type="short sequence motif" description="Cx9C motif 1" evidence="2">
    <location>
        <begin position="31"/>
        <end position="41"/>
    </location>
</feature>
<feature type="short sequence motif" description="Cx9C motif 2" evidence="2">
    <location>
        <begin position="53"/>
        <end position="63"/>
    </location>
</feature>
<feature type="disulfide bond" evidence="2">
    <location>
        <begin position="31"/>
        <end position="63"/>
    </location>
</feature>
<feature type="disulfide bond" evidence="2">
    <location>
        <begin position="41"/>
        <end position="53"/>
    </location>
</feature>
<comment type="function">
    <text evidence="1">Required for the assembly of mitochondrial cytochrome c oxidase.</text>
</comment>
<comment type="subcellular location">
    <subcellularLocation>
        <location evidence="1">Cytoplasm</location>
    </subcellularLocation>
    <subcellularLocation>
        <location evidence="1">Mitochondrion intermembrane space</location>
    </subcellularLocation>
</comment>
<comment type="similarity">
    <text evidence="4">Belongs to the COX19 family.</text>
</comment>
<gene>
    <name type="primary">COX19</name>
</gene>